<keyword id="KW-0002">3D-structure</keyword>
<keyword id="KW-0156">Chromatin regulator</keyword>
<keyword id="KW-0539">Nucleus</keyword>
<keyword id="KW-1267">Proteomics identification</keyword>
<keyword id="KW-1185">Reference proteome</keyword>
<keyword id="KW-0678">Repressor</keyword>
<keyword id="KW-0804">Transcription</keyword>
<keyword id="KW-0805">Transcription regulation</keyword>
<proteinExistence type="evidence at protein level"/>
<evidence type="ECO:0000255" key="1">
    <source>
        <dbReference type="PROSITE-ProRule" id="PRU00053"/>
    </source>
</evidence>
<evidence type="ECO:0000256" key="2">
    <source>
        <dbReference type="SAM" id="MobiDB-lite"/>
    </source>
</evidence>
<evidence type="ECO:0000269" key="3">
    <source>
    </source>
</evidence>
<evidence type="ECO:0000269" key="4">
    <source>
    </source>
</evidence>
<evidence type="ECO:0000269" key="5">
    <source>
    </source>
</evidence>
<evidence type="ECO:0000269" key="6">
    <source>
    </source>
</evidence>
<evidence type="ECO:0000269" key="7">
    <source>
    </source>
</evidence>
<evidence type="ECO:0000269" key="8">
    <source>
    </source>
</evidence>
<evidence type="ECO:0000269" key="9">
    <source>
    </source>
</evidence>
<evidence type="ECO:0000305" key="10"/>
<evidence type="ECO:0007829" key="11">
    <source>
        <dbReference type="PDB" id="3GS2"/>
    </source>
</evidence>
<evidence type="ECO:0007829" key="12">
    <source>
        <dbReference type="PDB" id="4MN3"/>
    </source>
</evidence>
<organism>
    <name type="scientific">Homo sapiens</name>
    <name type="common">Human</name>
    <dbReference type="NCBI Taxonomy" id="9606"/>
    <lineage>
        <taxon>Eukaryota</taxon>
        <taxon>Metazoa</taxon>
        <taxon>Chordata</taxon>
        <taxon>Craniata</taxon>
        <taxon>Vertebrata</taxon>
        <taxon>Euteleostomi</taxon>
        <taxon>Mammalia</taxon>
        <taxon>Eutheria</taxon>
        <taxon>Euarchontoglires</taxon>
        <taxon>Primates</taxon>
        <taxon>Haplorrhini</taxon>
        <taxon>Catarrhini</taxon>
        <taxon>Hominidae</taxon>
        <taxon>Homo</taxon>
    </lineage>
</organism>
<gene>
    <name type="primary">CBX7</name>
</gene>
<dbReference type="EMBL" id="AL031846">
    <property type="status" value="NOT_ANNOTATED_CDS"/>
    <property type="molecule type" value="Genomic_DNA"/>
</dbReference>
<dbReference type="EMBL" id="BC051773">
    <property type="protein sequence ID" value="AAH51773.1"/>
    <property type="molecule type" value="mRNA"/>
</dbReference>
<dbReference type="CCDS" id="CCDS13986.1"/>
<dbReference type="RefSeq" id="NP_783640.1">
    <property type="nucleotide sequence ID" value="NM_175709.5"/>
</dbReference>
<dbReference type="PDB" id="2K1B">
    <property type="method" value="NMR"/>
    <property type="chains" value="A=7-62"/>
</dbReference>
<dbReference type="PDB" id="2L12">
    <property type="method" value="NMR"/>
    <property type="chains" value="A=7-62"/>
</dbReference>
<dbReference type="PDB" id="2L1B">
    <property type="method" value="NMR"/>
    <property type="chains" value="A=8-62"/>
</dbReference>
<dbReference type="PDB" id="3GS2">
    <property type="method" value="X-ray"/>
    <property type="resolution" value="1.70 A"/>
    <property type="chains" value="B/D=219-248"/>
</dbReference>
<dbReference type="PDB" id="4MN3">
    <property type="method" value="X-ray"/>
    <property type="resolution" value="1.54 A"/>
    <property type="chains" value="A=7-62"/>
</dbReference>
<dbReference type="PDB" id="5EPJ">
    <property type="method" value="X-ray"/>
    <property type="resolution" value="1.60 A"/>
    <property type="chains" value="A=7-62"/>
</dbReference>
<dbReference type="PDB" id="6V2R">
    <property type="method" value="X-ray"/>
    <property type="resolution" value="1.60 A"/>
    <property type="chains" value="A=7-62"/>
</dbReference>
<dbReference type="PDB" id="8SII">
    <property type="method" value="X-ray"/>
    <property type="resolution" value="1.37 A"/>
    <property type="chains" value="A/B=7-62"/>
</dbReference>
<dbReference type="PDBsum" id="2K1B"/>
<dbReference type="PDBsum" id="2L12"/>
<dbReference type="PDBsum" id="2L1B"/>
<dbReference type="PDBsum" id="3GS2"/>
<dbReference type="PDBsum" id="4MN3"/>
<dbReference type="PDBsum" id="5EPJ"/>
<dbReference type="PDBsum" id="6V2R"/>
<dbReference type="PDBsum" id="8SII"/>
<dbReference type="BMRB" id="O95931"/>
<dbReference type="SMR" id="O95931"/>
<dbReference type="BioGRID" id="117044">
    <property type="interactions" value="45"/>
</dbReference>
<dbReference type="ComplexPortal" id="CPX-2600">
    <property type="entry name" value="Polycomb repressive complex 1, RING1-PCGF2-CBX7-PHC1 variant"/>
</dbReference>
<dbReference type="ComplexPortal" id="CPX-2601">
    <property type="entry name" value="Polycomb repressive complex 1, RING1-PCGF2-CBX7-PHC2 variant"/>
</dbReference>
<dbReference type="ComplexPortal" id="CPX-2619">
    <property type="entry name" value="Polycomb repressive complex 1, RING1-PCGF2-CBX7-PHC3 variant"/>
</dbReference>
<dbReference type="ComplexPortal" id="CPX-7513">
    <property type="entry name" value="Polycomb repressive complex 1, RING1-PCGF4-CBX7-PHC1 variant"/>
</dbReference>
<dbReference type="ComplexPortal" id="CPX-7514">
    <property type="entry name" value="Polycomb repressive complex 1, RING1-PCGF4-CBX7-PHC2 variant"/>
</dbReference>
<dbReference type="ComplexPortal" id="CPX-7515">
    <property type="entry name" value="Polycomb repressive complex 1, RING1-PCGF4-CBX7-PHC3 variant"/>
</dbReference>
<dbReference type="ComplexPortal" id="CPX-7530">
    <property type="entry name" value="Polycomb repressive complex 1, RING2-PCGF2-CBX7-PHC1 variant"/>
</dbReference>
<dbReference type="ComplexPortal" id="CPX-7531">
    <property type="entry name" value="Polycomb repressive complex 1, RING2-PCGF2-CBX7-PHC2 variant"/>
</dbReference>
<dbReference type="ComplexPortal" id="CPX-7532">
    <property type="entry name" value="Polycomb repressive complex 1, RING2-PCGF2-CBX7-PHC3 variant"/>
</dbReference>
<dbReference type="ComplexPortal" id="CPX-7551">
    <property type="entry name" value="Polycomb repressive complex 1, RING2-PCGF4-CBX7-PHC1 variant"/>
</dbReference>
<dbReference type="ComplexPortal" id="CPX-7552">
    <property type="entry name" value="Polycomb repressive complex 1, RING2-PCGF4-CBX7-PHC2 variant"/>
</dbReference>
<dbReference type="ComplexPortal" id="CPX-7553">
    <property type="entry name" value="Polycomb repressive complex 1, RING2-PCGF4-CBX7-PHC3 variant"/>
</dbReference>
<dbReference type="DIP" id="DIP-44565N"/>
<dbReference type="FunCoup" id="O95931">
    <property type="interactions" value="1906"/>
</dbReference>
<dbReference type="IntAct" id="O95931">
    <property type="interactions" value="36"/>
</dbReference>
<dbReference type="MINT" id="O95931"/>
<dbReference type="STRING" id="9606.ENSP00000216133"/>
<dbReference type="BindingDB" id="O95931"/>
<dbReference type="ChEMBL" id="CHEMBL1764946"/>
<dbReference type="GlyGen" id="O95931">
    <property type="glycosylation" value="1 site"/>
</dbReference>
<dbReference type="iPTMnet" id="O95931"/>
<dbReference type="PhosphoSitePlus" id="O95931"/>
<dbReference type="BioMuta" id="CBX7"/>
<dbReference type="jPOST" id="O95931"/>
<dbReference type="MassIVE" id="O95931"/>
<dbReference type="PaxDb" id="9606-ENSP00000216133"/>
<dbReference type="PeptideAtlas" id="O95931"/>
<dbReference type="ProteomicsDB" id="51131"/>
<dbReference type="Antibodypedia" id="26564">
    <property type="antibodies" value="133 antibodies from 29 providers"/>
</dbReference>
<dbReference type="DNASU" id="23492"/>
<dbReference type="Ensembl" id="ENST00000216133.10">
    <property type="protein sequence ID" value="ENSP00000216133.5"/>
    <property type="gene ID" value="ENSG00000100307.13"/>
</dbReference>
<dbReference type="GeneID" id="23492"/>
<dbReference type="KEGG" id="hsa:23492"/>
<dbReference type="MANE-Select" id="ENST00000216133.10">
    <property type="protein sequence ID" value="ENSP00000216133.5"/>
    <property type="RefSeq nucleotide sequence ID" value="NM_175709.5"/>
    <property type="RefSeq protein sequence ID" value="NP_783640.1"/>
</dbReference>
<dbReference type="UCSC" id="uc003axb.4">
    <property type="organism name" value="human"/>
</dbReference>
<dbReference type="AGR" id="HGNC:1557"/>
<dbReference type="CTD" id="23492"/>
<dbReference type="DisGeNET" id="23492"/>
<dbReference type="GeneCards" id="CBX7"/>
<dbReference type="HGNC" id="HGNC:1557">
    <property type="gene designation" value="CBX7"/>
</dbReference>
<dbReference type="HPA" id="ENSG00000100307">
    <property type="expression patterns" value="Low tissue specificity"/>
</dbReference>
<dbReference type="MIM" id="608457">
    <property type="type" value="gene"/>
</dbReference>
<dbReference type="neXtProt" id="NX_O95931"/>
<dbReference type="OpenTargets" id="ENSG00000100307"/>
<dbReference type="PharmGKB" id="PA26132"/>
<dbReference type="VEuPathDB" id="HostDB:ENSG00000100307"/>
<dbReference type="eggNOG" id="KOG2748">
    <property type="taxonomic scope" value="Eukaryota"/>
</dbReference>
<dbReference type="GeneTree" id="ENSGT00940000158365"/>
<dbReference type="HOGENOM" id="CLU_042051_1_0_1"/>
<dbReference type="InParanoid" id="O95931"/>
<dbReference type="OMA" id="PHKAHKY"/>
<dbReference type="OrthoDB" id="1918685at2759"/>
<dbReference type="PAN-GO" id="O95931">
    <property type="GO annotations" value="2 GO annotations based on evolutionary models"/>
</dbReference>
<dbReference type="PhylomeDB" id="O95931"/>
<dbReference type="TreeFam" id="TF106456"/>
<dbReference type="PathwayCommons" id="O95931"/>
<dbReference type="SignaLink" id="O95931"/>
<dbReference type="SIGNOR" id="O95931"/>
<dbReference type="BioGRID-ORCS" id="23492">
    <property type="hits" value="9 hits in 1163 CRISPR screens"/>
</dbReference>
<dbReference type="EvolutionaryTrace" id="O95931"/>
<dbReference type="GenomeRNAi" id="23492"/>
<dbReference type="Pharos" id="O95931">
    <property type="development level" value="Tchem"/>
</dbReference>
<dbReference type="PRO" id="PR:O95931"/>
<dbReference type="Proteomes" id="UP000005640">
    <property type="component" value="Chromosome 22"/>
</dbReference>
<dbReference type="RNAct" id="O95931">
    <property type="molecule type" value="protein"/>
</dbReference>
<dbReference type="Bgee" id="ENSG00000100307">
    <property type="expression patterns" value="Expressed in cerebellar vermis and 210 other cell types or tissues"/>
</dbReference>
<dbReference type="ExpressionAtlas" id="O95931">
    <property type="expression patterns" value="baseline and differential"/>
</dbReference>
<dbReference type="GO" id="GO:0000785">
    <property type="term" value="C:chromatin"/>
    <property type="evidence" value="ECO:0000314"/>
    <property type="project" value="UniProtKB"/>
</dbReference>
<dbReference type="GO" id="GO:0005829">
    <property type="term" value="C:cytosol"/>
    <property type="evidence" value="ECO:0000314"/>
    <property type="project" value="HPA"/>
</dbReference>
<dbReference type="GO" id="GO:0005654">
    <property type="term" value="C:nucleoplasm"/>
    <property type="evidence" value="ECO:0000314"/>
    <property type="project" value="HPA"/>
</dbReference>
<dbReference type="GO" id="GO:0005634">
    <property type="term" value="C:nucleus"/>
    <property type="evidence" value="ECO:0000314"/>
    <property type="project" value="UniProtKB"/>
</dbReference>
<dbReference type="GO" id="GO:0031519">
    <property type="term" value="C:PcG protein complex"/>
    <property type="evidence" value="ECO:0000314"/>
    <property type="project" value="UniProtKB"/>
</dbReference>
<dbReference type="GO" id="GO:0035102">
    <property type="term" value="C:PRC1 complex"/>
    <property type="evidence" value="ECO:0000250"/>
    <property type="project" value="UniProtKB"/>
</dbReference>
<dbReference type="GO" id="GO:0006325">
    <property type="term" value="P:chromatin organization"/>
    <property type="evidence" value="ECO:0007669"/>
    <property type="project" value="UniProtKB-KW"/>
</dbReference>
<dbReference type="GO" id="GO:0000122">
    <property type="term" value="P:negative regulation of transcription by RNA polymerase II"/>
    <property type="evidence" value="ECO:0000315"/>
    <property type="project" value="UniProtKB"/>
</dbReference>
<dbReference type="CDD" id="cd18646">
    <property type="entry name" value="CD_Cbx7"/>
    <property type="match status" value="1"/>
</dbReference>
<dbReference type="FunFam" id="2.40.50.40:FF:000006">
    <property type="entry name" value="Chromobox protein homolog 7"/>
    <property type="match status" value="1"/>
</dbReference>
<dbReference type="Gene3D" id="2.40.50.40">
    <property type="match status" value="1"/>
</dbReference>
<dbReference type="InterPro" id="IPR043000">
    <property type="entry name" value="CBX7"/>
</dbReference>
<dbReference type="InterPro" id="IPR033773">
    <property type="entry name" value="CBX7_C"/>
</dbReference>
<dbReference type="InterPro" id="IPR016197">
    <property type="entry name" value="Chromo-like_dom_sf"/>
</dbReference>
<dbReference type="InterPro" id="IPR000953">
    <property type="entry name" value="Chromo/chromo_shadow_dom"/>
</dbReference>
<dbReference type="InterPro" id="IPR017984">
    <property type="entry name" value="Chromo_dom_subgr"/>
</dbReference>
<dbReference type="InterPro" id="IPR023780">
    <property type="entry name" value="Chromo_domain"/>
</dbReference>
<dbReference type="InterPro" id="IPR023779">
    <property type="entry name" value="Chromodomain_CS"/>
</dbReference>
<dbReference type="PANTHER" id="PTHR47277">
    <property type="entry name" value="CHROMOBOX PROTEIN HOMOLOG 7"/>
    <property type="match status" value="1"/>
</dbReference>
<dbReference type="PANTHER" id="PTHR47277:SF1">
    <property type="entry name" value="CHROMOBOX PROTEIN HOMOLOG 7"/>
    <property type="match status" value="1"/>
</dbReference>
<dbReference type="Pfam" id="PF17218">
    <property type="entry name" value="CBX7_C"/>
    <property type="match status" value="1"/>
</dbReference>
<dbReference type="Pfam" id="PF00385">
    <property type="entry name" value="Chromo"/>
    <property type="match status" value="1"/>
</dbReference>
<dbReference type="PRINTS" id="PR00504">
    <property type="entry name" value="CHROMODOMAIN"/>
</dbReference>
<dbReference type="SMART" id="SM00298">
    <property type="entry name" value="CHROMO"/>
    <property type="match status" value="1"/>
</dbReference>
<dbReference type="SUPFAM" id="SSF54160">
    <property type="entry name" value="Chromo domain-like"/>
    <property type="match status" value="1"/>
</dbReference>
<dbReference type="PROSITE" id="PS00598">
    <property type="entry name" value="CHROMO_1"/>
    <property type="match status" value="1"/>
</dbReference>
<dbReference type="PROSITE" id="PS50013">
    <property type="entry name" value="CHROMO_2"/>
    <property type="match status" value="1"/>
</dbReference>
<sequence length="251" mass="28341">MELSAIGEQVFAVESIRKKRVRKGKVEYLVKWKGWPPKYSTWEPEEHILDPRLVMAYEEKEERDRASGYRKRGPKPKRLLLQRLYSMDLRSSHKAKGKEKLCFSLTCPLGSGSPEGVVKAGAPELVDKGPLVPTLPFPLRKPRKAHKYLRLSRKKFPPRGPNLESHSHRRELFLQEPPAPDVLQAAGEWEPAAQPPEEEADADLAEGPPPWTPALPSSEVTVTDITANSITVTFREAQAAEGFFRDRSGKF</sequence>
<feature type="chain" id="PRO_0000080212" description="Chromobox protein homolog 7">
    <location>
        <begin position="1"/>
        <end position="251"/>
    </location>
</feature>
<feature type="domain" description="Chromo" evidence="1">
    <location>
        <begin position="11"/>
        <end position="69"/>
    </location>
</feature>
<feature type="region of interest" description="Disordered" evidence="2">
    <location>
        <begin position="190"/>
        <end position="220"/>
    </location>
</feature>
<feature type="region of interest" description="Required for cellular lifespan extension">
    <location>
        <begin position="223"/>
        <end position="236"/>
    </location>
</feature>
<feature type="mutagenesis site" description="Loss of cellular lifespan extension." evidence="3">
    <original>K</original>
    <variation>A</variation>
    <location>
        <position position="31"/>
    </location>
</feature>
<feature type="mutagenesis site" description="Loss of cellular lifespan extension." evidence="3">
    <original>W</original>
    <variation>A</variation>
    <location>
        <position position="32"/>
    </location>
</feature>
<feature type="mutagenesis site" description="Loss of interaction with RNF2." evidence="6">
    <original>F</original>
    <variation>D</variation>
    <location>
        <position position="234"/>
    </location>
</feature>
<feature type="mutagenesis site" description="Reduced interaction with RNF2." evidence="6">
    <original>F</original>
    <variation>D</variation>
    <location>
        <position position="244"/>
    </location>
</feature>
<feature type="sequence conflict" description="In Ref. 2; AAH51773." evidence="10" ref="2">
    <original>K</original>
    <variation>R</variation>
    <location>
        <position position="77"/>
    </location>
</feature>
<feature type="sequence conflict" description="In Ref. 2; AAH51773." evidence="10" ref="2">
    <original>A</original>
    <variation>P</variation>
    <location>
        <position position="239"/>
    </location>
</feature>
<feature type="strand" evidence="12">
    <location>
        <begin position="13"/>
        <end position="22"/>
    </location>
</feature>
<feature type="strand" evidence="12">
    <location>
        <begin position="25"/>
        <end position="32"/>
    </location>
</feature>
<feature type="helix" evidence="12">
    <location>
        <begin position="37"/>
        <end position="39"/>
    </location>
</feature>
<feature type="strand" evidence="12">
    <location>
        <begin position="41"/>
        <end position="44"/>
    </location>
</feature>
<feature type="helix" evidence="12">
    <location>
        <begin position="45"/>
        <end position="47"/>
    </location>
</feature>
<feature type="helix" evidence="12">
    <location>
        <begin position="51"/>
        <end position="60"/>
    </location>
</feature>
<feature type="strand" evidence="11">
    <location>
        <begin position="221"/>
        <end position="227"/>
    </location>
</feature>
<feature type="strand" evidence="11">
    <location>
        <begin position="230"/>
        <end position="238"/>
    </location>
</feature>
<feature type="turn" evidence="11">
    <location>
        <begin position="241"/>
        <end position="243"/>
    </location>
</feature>
<protein>
    <recommendedName>
        <fullName>Chromobox protein homolog 7</fullName>
    </recommendedName>
</protein>
<name>CBX7_HUMAN</name>
<accession>O95931</accession>
<accession>Q86T17</accession>
<reference key="1">
    <citation type="journal article" date="1999" name="Nature">
        <title>The DNA sequence of human chromosome 22.</title>
        <authorList>
            <person name="Dunham I."/>
            <person name="Hunt A.R."/>
            <person name="Collins J.E."/>
            <person name="Bruskiewich R."/>
            <person name="Beare D.M."/>
            <person name="Clamp M."/>
            <person name="Smink L.J."/>
            <person name="Ainscough R."/>
            <person name="Almeida J.P."/>
            <person name="Babbage A.K."/>
            <person name="Bagguley C."/>
            <person name="Bailey J."/>
            <person name="Barlow K.F."/>
            <person name="Bates K.N."/>
            <person name="Beasley O.P."/>
            <person name="Bird C.P."/>
            <person name="Blakey S.E."/>
            <person name="Bridgeman A.M."/>
            <person name="Buck D."/>
            <person name="Burgess J."/>
            <person name="Burrill W.D."/>
            <person name="Burton J."/>
            <person name="Carder C."/>
            <person name="Carter N.P."/>
            <person name="Chen Y."/>
            <person name="Clark G."/>
            <person name="Clegg S.M."/>
            <person name="Cobley V.E."/>
            <person name="Cole C.G."/>
            <person name="Collier R.E."/>
            <person name="Connor R."/>
            <person name="Conroy D."/>
            <person name="Corby N.R."/>
            <person name="Coville G.J."/>
            <person name="Cox A.V."/>
            <person name="Davis J."/>
            <person name="Dawson E."/>
            <person name="Dhami P.D."/>
            <person name="Dockree C."/>
            <person name="Dodsworth S.J."/>
            <person name="Durbin R.M."/>
            <person name="Ellington A.G."/>
            <person name="Evans K.L."/>
            <person name="Fey J.M."/>
            <person name="Fleming K."/>
            <person name="French L."/>
            <person name="Garner A.A."/>
            <person name="Gilbert J.G.R."/>
            <person name="Goward M.E."/>
            <person name="Grafham D.V."/>
            <person name="Griffiths M.N.D."/>
            <person name="Hall C."/>
            <person name="Hall R.E."/>
            <person name="Hall-Tamlyn G."/>
            <person name="Heathcott R.W."/>
            <person name="Ho S."/>
            <person name="Holmes S."/>
            <person name="Hunt S.E."/>
            <person name="Jones M.C."/>
            <person name="Kershaw J."/>
            <person name="Kimberley A.M."/>
            <person name="King A."/>
            <person name="Laird G.K."/>
            <person name="Langford C.F."/>
            <person name="Leversha M.A."/>
            <person name="Lloyd C."/>
            <person name="Lloyd D.M."/>
            <person name="Martyn I.D."/>
            <person name="Mashreghi-Mohammadi M."/>
            <person name="Matthews L.H."/>
            <person name="Mccann O.T."/>
            <person name="Mcclay J."/>
            <person name="Mclaren S."/>
            <person name="McMurray A.A."/>
            <person name="Milne S.A."/>
            <person name="Mortimore B.J."/>
            <person name="Odell C.N."/>
            <person name="Pavitt R."/>
            <person name="Pearce A.V."/>
            <person name="Pearson D."/>
            <person name="Phillimore B.J.C.T."/>
            <person name="Phillips S.H."/>
            <person name="Plumb R.W."/>
            <person name="Ramsay H."/>
            <person name="Ramsey Y."/>
            <person name="Rogers L."/>
            <person name="Ross M.T."/>
            <person name="Scott C.E."/>
            <person name="Sehra H.K."/>
            <person name="Skuce C.D."/>
            <person name="Smalley S."/>
            <person name="Smith M.L."/>
            <person name="Soderlund C."/>
            <person name="Spragon L."/>
            <person name="Steward C.A."/>
            <person name="Sulston J.E."/>
            <person name="Swann R.M."/>
            <person name="Vaudin M."/>
            <person name="Wall M."/>
            <person name="Wallis J.M."/>
            <person name="Whiteley M.N."/>
            <person name="Willey D.L."/>
            <person name="Williams L."/>
            <person name="Williams S.A."/>
            <person name="Williamson H."/>
            <person name="Wilmer T.E."/>
            <person name="Wilming L."/>
            <person name="Wright C.L."/>
            <person name="Hubbard T."/>
            <person name="Bentley D.R."/>
            <person name="Beck S."/>
            <person name="Rogers J."/>
            <person name="Shimizu N."/>
            <person name="Minoshima S."/>
            <person name="Kawasaki K."/>
            <person name="Sasaki T."/>
            <person name="Asakawa S."/>
            <person name="Kudoh J."/>
            <person name="Shintani A."/>
            <person name="Shibuya K."/>
            <person name="Yoshizaki Y."/>
            <person name="Aoki N."/>
            <person name="Mitsuyama S."/>
            <person name="Roe B.A."/>
            <person name="Chen F."/>
            <person name="Chu L."/>
            <person name="Crabtree J."/>
            <person name="Deschamps S."/>
            <person name="Do A."/>
            <person name="Do T."/>
            <person name="Dorman A."/>
            <person name="Fang F."/>
            <person name="Fu Y."/>
            <person name="Hu P."/>
            <person name="Hua A."/>
            <person name="Kenton S."/>
            <person name="Lai H."/>
            <person name="Lao H.I."/>
            <person name="Lewis J."/>
            <person name="Lewis S."/>
            <person name="Lin S.-P."/>
            <person name="Loh P."/>
            <person name="Malaj E."/>
            <person name="Nguyen T."/>
            <person name="Pan H."/>
            <person name="Phan S."/>
            <person name="Qi S."/>
            <person name="Qian Y."/>
            <person name="Ray L."/>
            <person name="Ren Q."/>
            <person name="Shaull S."/>
            <person name="Sloan D."/>
            <person name="Song L."/>
            <person name="Wang Q."/>
            <person name="Wang Y."/>
            <person name="Wang Z."/>
            <person name="White J."/>
            <person name="Willingham D."/>
            <person name="Wu H."/>
            <person name="Yao Z."/>
            <person name="Zhan M."/>
            <person name="Zhang G."/>
            <person name="Chissoe S."/>
            <person name="Murray J."/>
            <person name="Miller N."/>
            <person name="Minx P."/>
            <person name="Fulton R."/>
            <person name="Johnson D."/>
            <person name="Bemis G."/>
            <person name="Bentley D."/>
            <person name="Bradshaw H."/>
            <person name="Bourne S."/>
            <person name="Cordes M."/>
            <person name="Du Z."/>
            <person name="Fulton L."/>
            <person name="Goela D."/>
            <person name="Graves T."/>
            <person name="Hawkins J."/>
            <person name="Hinds K."/>
            <person name="Kemp K."/>
            <person name="Latreille P."/>
            <person name="Layman D."/>
            <person name="Ozersky P."/>
            <person name="Rohlfing T."/>
            <person name="Scheet P."/>
            <person name="Walker C."/>
            <person name="Wamsley A."/>
            <person name="Wohldmann P."/>
            <person name="Pepin K."/>
            <person name="Nelson J."/>
            <person name="Korf I."/>
            <person name="Bedell J.A."/>
            <person name="Hillier L.W."/>
            <person name="Mardis E."/>
            <person name="Waterston R."/>
            <person name="Wilson R."/>
            <person name="Emanuel B.S."/>
            <person name="Shaikh T."/>
            <person name="Kurahashi H."/>
            <person name="Saitta S."/>
            <person name="Budarf M.L."/>
            <person name="McDermid H.E."/>
            <person name="Johnson A."/>
            <person name="Wong A.C.C."/>
            <person name="Morrow B.E."/>
            <person name="Edelmann L."/>
            <person name="Kim U.J."/>
            <person name="Shizuya H."/>
            <person name="Simon M.I."/>
            <person name="Dumanski J.P."/>
            <person name="Peyrard M."/>
            <person name="Kedra D."/>
            <person name="Seroussi E."/>
            <person name="Fransson I."/>
            <person name="Tapia I."/>
            <person name="Bruder C.E."/>
            <person name="O'Brien K.P."/>
            <person name="Wilkinson P."/>
            <person name="Bodenteich A."/>
            <person name="Hartman K."/>
            <person name="Hu X."/>
            <person name="Khan A.S."/>
            <person name="Lane L."/>
            <person name="Tilahun Y."/>
            <person name="Wright H."/>
        </authorList>
    </citation>
    <scope>NUCLEOTIDE SEQUENCE [LARGE SCALE GENOMIC DNA]</scope>
</reference>
<reference key="2">
    <citation type="journal article" date="2004" name="Genome Res.">
        <title>The status, quality, and expansion of the NIH full-length cDNA project: the Mammalian Gene Collection (MGC).</title>
        <authorList>
            <consortium name="The MGC Project Team"/>
        </authorList>
    </citation>
    <scope>NUCLEOTIDE SEQUENCE [LARGE SCALE MRNA]</scope>
    <source>
        <tissue>PNS</tissue>
    </source>
</reference>
<reference key="3">
    <citation type="journal article" date="2004" name="Nat. Cell Biol.">
        <title>Polycomb CBX7 has a unifying role in cellular lifespan.</title>
        <authorList>
            <person name="Gil J."/>
            <person name="Bernard D."/>
            <person name="Martinez D."/>
            <person name="Beach D."/>
        </authorList>
    </citation>
    <scope>SUBCELLULAR LOCATION</scope>
    <scope>INTERACTION WITH RING1</scope>
    <scope>MUTAGENESIS OF LYS-31 AND TRP-32</scope>
</reference>
<reference key="4">
    <citation type="journal article" date="2009" name="Biochemistry">
        <title>Ring1B contains a ubiquitin-like docking module for interaction with Cbx proteins.</title>
        <authorList>
            <person name="Bezsonova I."/>
            <person name="Walker J.R."/>
            <person name="Bacik J.P."/>
            <person name="Duan S."/>
            <person name="Dhe-Paganon S."/>
            <person name="Arrowsmith C.H."/>
        </authorList>
    </citation>
    <scope>INTERACTION WITH RNF2</scope>
</reference>
<reference key="5">
    <citation type="journal article" date="2009" name="PLoS ONE">
        <title>Several distinct polycomb complexes regulate and co-localize on the INK4a tumor suppressor locus.</title>
        <authorList>
            <person name="Maertens G.N."/>
            <person name="El Messaoudi-Aubert S."/>
            <person name="Racek T."/>
            <person name="Stock J.K."/>
            <person name="Nicholls J."/>
            <person name="Rodriguez-Niedenfuhr M."/>
            <person name="Gil J."/>
            <person name="Peters G."/>
        </authorList>
    </citation>
    <scope>FUNCTION</scope>
    <scope>IDENTIFICATION IN A PRC1-LIKE COMPLEX</scope>
    <scope>INTERACTION WITH BMI1</scope>
</reference>
<reference key="6">
    <citation type="journal article" date="2010" name="PLoS ONE">
        <title>Polycomb CBX7 directly controls trimethylation of histone H3 at lysine 9 at the p16 locus.</title>
        <authorList>
            <person name="Li Q."/>
            <person name="Wang X."/>
            <person name="Lu Z."/>
            <person name="Zhang B."/>
            <person name="Guan Z."/>
            <person name="Liu Z."/>
            <person name="Zhong Q."/>
            <person name="Gu L."/>
            <person name="Zhou J."/>
            <person name="Zhu B."/>
            <person name="Ji J."/>
            <person name="Deng D."/>
        </authorList>
    </citation>
    <scope>FUNCTION</scope>
    <scope>SUBCELLULAR LOCATION</scope>
</reference>
<reference key="7">
    <citation type="journal article" date="2011" name="Mol. Cell. Proteomics">
        <title>Interaction proteomics analysis of polycomb proteins defines distinct PRC1 Complexes in mammalian cells.</title>
        <authorList>
            <person name="Vandamme J."/>
            <person name="Volkel P."/>
            <person name="Rosnoblet C."/>
            <person name="Le Faou P."/>
            <person name="Angrand P.O."/>
        </authorList>
    </citation>
    <scope>FUNCTION</scope>
    <scope>IDENTIFICATION BY MASS SPECTROMETRY</scope>
    <scope>SUBCELLULAR LOCATION</scope>
    <scope>IDENTIFICATION IN A PRC1-LIKE COMPLEX</scope>
    <scope>INTERACTION WITH RING1; RNF2; PCGF1; PCGF2; PCGF3; BMI1; PCGF5 AND PCGF6</scope>
</reference>
<reference key="8">
    <citation type="submission" date="2008-03" db="PDB data bank">
        <title>Solution NMR structure of the chromobox protein homolog 7.</title>
        <authorList>
            <consortium name="Structural genomics consortium (SGC)"/>
        </authorList>
    </citation>
    <scope>STRUCTURE BY NMR OF 7-62</scope>
</reference>
<reference key="9">
    <citation type="journal article" date="2010" name="Structure">
        <title>Polycomb group targeting through different binding partners of RING1B C-terminal domain.</title>
        <authorList>
            <person name="Wang R."/>
            <person name="Taylor A.B."/>
            <person name="Leal B.Z."/>
            <person name="Chadwell L.V."/>
            <person name="Ilangovan U."/>
            <person name="Robinson A.K."/>
            <person name="Schirf V."/>
            <person name="Hart P.J."/>
            <person name="Lafer E.M."/>
            <person name="Demeler B."/>
            <person name="Hinck A.P."/>
            <person name="McEwen D.G."/>
            <person name="Kim C.A."/>
        </authorList>
    </citation>
    <scope>X-RAY CRYSTALLOGRAPHY (1.7 ANGSTROMS) OF 219-248 IN COMPLEX WITH RNF2</scope>
    <scope>INTERACTION WITH RNF2</scope>
    <scope>MUTAGENESIS OF PHE-234 AND PHE-244</scope>
</reference>
<reference key="10">
    <citation type="journal article" date="2011" name="J. Biol. Chem.">
        <title>Recognition and specificity determinants of the human cbx chromodomains.</title>
        <authorList>
            <person name="Kaustov L."/>
            <person name="Ouyang H."/>
            <person name="Amaya M."/>
            <person name="Lemak A."/>
            <person name="Nady N."/>
            <person name="Duan S."/>
            <person name="Wasney G.A."/>
            <person name="Li Z."/>
            <person name="Vedadi M."/>
            <person name="Schapira M."/>
            <person name="Min J."/>
            <person name="Arrowsmith C.H."/>
        </authorList>
    </citation>
    <scope>STRUCTURE BY NMR OF 8-62</scope>
    <scope>FUNCTION</scope>
    <scope>INTERACTION WITH TRIMETHYLATED LYSINE RESIDUES</scope>
</reference>
<comment type="function">
    <text evidence="4 7 8 9">Component of a Polycomb group (PcG) multiprotein PRC1-like complex, a complex class required to maintain the transcriptionally repressive state of many genes, including Hox genes, throughout development. PcG PRC1 complex acts via chromatin remodeling and modification of histones; it mediates monoubiquitination of histone H2A 'Lys-119', rendering chromatin heritably changed in its expressibility. Promotes histone H3 trimethylation at 'Lys-9' (H3K9me3). Binds to trimethylated lysine residues in histones, and possibly also other proteins. Regulator of cellular lifespan by maintaining the repression of CDKN2A, but not by inducing telomerase activity.</text>
</comment>
<comment type="subunit">
    <text evidence="3 4 5 6 7 9">Component of a PRC1-like complex. Interacts with RING1 and RNF2/RING1B, but not with BMI1, EED or EZH2. Interacts with PCGF1, PCGF2, PCGF3, PCGF5 and PCGF6.</text>
</comment>
<comment type="interaction">
    <interactant intactId="EBI-3923843">
        <id>O95931</id>
    </interactant>
    <interactant intactId="EBI-2341576">
        <id>P35226</id>
        <label>BMI1</label>
    </interactant>
    <organismsDiffer>false</organismsDiffer>
    <experiments>14</experiments>
</comment>
<comment type="interaction">
    <interactant intactId="EBI-3923843">
        <id>O95931</id>
    </interactant>
    <interactant intactId="EBI-1055820">
        <id>Q9HCE1</id>
        <label>MOV10</label>
    </interactant>
    <organismsDiffer>false</organismsDiffer>
    <experiments>6</experiments>
</comment>
<comment type="interaction">
    <interactant intactId="EBI-3923843">
        <id>O95931</id>
    </interactant>
    <interactant intactId="EBI-749901">
        <id>Q9BSM1</id>
        <label>PCGF1</label>
    </interactant>
    <organismsDiffer>false</organismsDiffer>
    <experiments>3</experiments>
</comment>
<comment type="interaction">
    <interactant intactId="EBI-3923843">
        <id>O95931</id>
    </interactant>
    <interactant intactId="EBI-2129767">
        <id>P35227</id>
        <label>PCGF2</label>
    </interactant>
    <organismsDiffer>false</organismsDiffer>
    <experiments>8</experiments>
</comment>
<comment type="interaction">
    <interactant intactId="EBI-3923843">
        <id>O95931</id>
    </interactant>
    <interactant intactId="EBI-2339807">
        <id>Q3KNV8</id>
        <label>PCGF3</label>
    </interactant>
    <organismsDiffer>false</organismsDiffer>
    <experiments>3</experiments>
</comment>
<comment type="interaction">
    <interactant intactId="EBI-3923843">
        <id>O95931</id>
    </interactant>
    <interactant intactId="EBI-1048026">
        <id>Q9BYE7</id>
        <label>PCGF6</label>
    </interactant>
    <organismsDiffer>false</organismsDiffer>
    <experiments>6</experiments>
</comment>
<comment type="interaction">
    <interactant intactId="EBI-3923843">
        <id>O95931</id>
    </interactant>
    <interactant intactId="EBI-752313">
        <id>Q06587</id>
        <label>RING1</label>
    </interactant>
    <organismsDiffer>false</organismsDiffer>
    <experiments>6</experiments>
</comment>
<comment type="interaction">
    <interactant intactId="EBI-3923843">
        <id>O95931</id>
    </interactant>
    <interactant intactId="EBI-722416">
        <id>Q99496</id>
        <label>RNF2</label>
    </interactant>
    <organismsDiffer>false</organismsDiffer>
    <experiments>17</experiments>
</comment>
<comment type="interaction">
    <interactant intactId="EBI-3923843">
        <id>O95931</id>
    </interactant>
    <interactant intactId="EBI-527853">
        <id>Q9UGI0</id>
        <label>ZRANB1</label>
    </interactant>
    <organismsDiffer>false</organismsDiffer>
    <experiments>3</experiments>
</comment>
<comment type="subcellular location">
    <subcellularLocation>
        <location evidence="3 8 9">Nucleus</location>
    </subcellularLocation>
</comment>
<comment type="miscellaneous">
    <text>The human orthologuous proteins of Drosophila Polycomb group protein Pc, CBX2, CBX4, CBX6, CBX7 and CBX8, show distinct nuclear localizations, contribute differently to transcriptional repression, and appear to be part of distinct PRC1-like protein complexes.</text>
</comment>
<comment type="online information" name="Atlas of Genetics and Cytogenetics in Oncology and Haematology">
    <link uri="https://atlasgeneticsoncology.org/gene/43845/CBX7"/>
</comment>